<comment type="function">
    <text evidence="1">Catalyzes the reductive methylation of 2'-deoxyuridine-5'-monophosphate (dUMP) to 2'-deoxythymidine-5'-monophosphate (dTMP) while utilizing 5,10-methylenetetrahydrofolate (mTHF) as the methyl donor and reductant in the reaction, yielding dihydrofolate (DHF) as a by-product. This enzymatic reaction provides an intracellular de novo source of dTMP, an essential precursor for DNA biosynthesis.</text>
</comment>
<comment type="catalytic activity">
    <reaction evidence="1">
        <text>dUMP + (6R)-5,10-methylene-5,6,7,8-tetrahydrofolate = 7,8-dihydrofolate + dTMP</text>
        <dbReference type="Rhea" id="RHEA:12104"/>
        <dbReference type="ChEBI" id="CHEBI:15636"/>
        <dbReference type="ChEBI" id="CHEBI:57451"/>
        <dbReference type="ChEBI" id="CHEBI:63528"/>
        <dbReference type="ChEBI" id="CHEBI:246422"/>
        <dbReference type="EC" id="2.1.1.45"/>
    </reaction>
</comment>
<comment type="pathway">
    <text evidence="1">Pyrimidine metabolism; dTTP biosynthesis.</text>
</comment>
<comment type="subunit">
    <text evidence="1">Homodimer.</text>
</comment>
<comment type="subcellular location">
    <subcellularLocation>
        <location evidence="1">Cytoplasm</location>
    </subcellularLocation>
</comment>
<comment type="similarity">
    <text evidence="1">Belongs to the thymidylate synthase family. Bacterial-type ThyA subfamily.</text>
</comment>
<reference key="1">
    <citation type="journal article" date="2005" name="Nucleic Acids Res.">
        <title>Genome dynamics and diversity of Shigella species, the etiologic agents of bacillary dysentery.</title>
        <authorList>
            <person name="Yang F."/>
            <person name="Yang J."/>
            <person name="Zhang X."/>
            <person name="Chen L."/>
            <person name="Jiang Y."/>
            <person name="Yan Y."/>
            <person name="Tang X."/>
            <person name="Wang J."/>
            <person name="Xiong Z."/>
            <person name="Dong J."/>
            <person name="Xue Y."/>
            <person name="Zhu Y."/>
            <person name="Xu X."/>
            <person name="Sun L."/>
            <person name="Chen S."/>
            <person name="Nie H."/>
            <person name="Peng J."/>
            <person name="Xu J."/>
            <person name="Wang Y."/>
            <person name="Yuan Z."/>
            <person name="Wen Y."/>
            <person name="Yao Z."/>
            <person name="Shen Y."/>
            <person name="Qiang B."/>
            <person name="Hou Y."/>
            <person name="Yu J."/>
            <person name="Jin Q."/>
        </authorList>
    </citation>
    <scope>NUCLEOTIDE SEQUENCE [LARGE SCALE GENOMIC DNA]</scope>
    <source>
        <strain>Sb227</strain>
    </source>
</reference>
<gene>
    <name evidence="1" type="primary">thyA</name>
    <name type="ordered locus">SBO_2719</name>
</gene>
<keyword id="KW-0963">Cytoplasm</keyword>
<keyword id="KW-0489">Methyltransferase</keyword>
<keyword id="KW-0545">Nucleotide biosynthesis</keyword>
<keyword id="KW-0808">Transferase</keyword>
<proteinExistence type="inferred from homology"/>
<accession>Q31XG0</accession>
<protein>
    <recommendedName>
        <fullName evidence="1">Thymidylate synthase</fullName>
        <shortName evidence="1">TS</shortName>
        <shortName evidence="1">TSase</shortName>
        <ecNumber evidence="1">2.1.1.45</ecNumber>
    </recommendedName>
</protein>
<organism>
    <name type="scientific">Shigella boydii serotype 4 (strain Sb227)</name>
    <dbReference type="NCBI Taxonomy" id="300268"/>
    <lineage>
        <taxon>Bacteria</taxon>
        <taxon>Pseudomonadati</taxon>
        <taxon>Pseudomonadota</taxon>
        <taxon>Gammaproteobacteria</taxon>
        <taxon>Enterobacterales</taxon>
        <taxon>Enterobacteriaceae</taxon>
        <taxon>Shigella</taxon>
    </lineage>
</organism>
<name>TYSY_SHIBS</name>
<evidence type="ECO:0000255" key="1">
    <source>
        <dbReference type="HAMAP-Rule" id="MF_00008"/>
    </source>
</evidence>
<dbReference type="EC" id="2.1.1.45" evidence="1"/>
<dbReference type="EMBL" id="CP000036">
    <property type="protein sequence ID" value="ABB67248.1"/>
    <property type="molecule type" value="Genomic_DNA"/>
</dbReference>
<dbReference type="RefSeq" id="WP_000816231.1">
    <property type="nucleotide sequence ID" value="NC_007613.1"/>
</dbReference>
<dbReference type="SMR" id="Q31XG0"/>
<dbReference type="KEGG" id="sbo:SBO_2719"/>
<dbReference type="HOGENOM" id="CLU_021669_0_0_6"/>
<dbReference type="UniPathway" id="UPA00575"/>
<dbReference type="Proteomes" id="UP000007067">
    <property type="component" value="Chromosome"/>
</dbReference>
<dbReference type="GO" id="GO:0005829">
    <property type="term" value="C:cytosol"/>
    <property type="evidence" value="ECO:0007669"/>
    <property type="project" value="TreeGrafter"/>
</dbReference>
<dbReference type="GO" id="GO:0004799">
    <property type="term" value="F:thymidylate synthase activity"/>
    <property type="evidence" value="ECO:0007669"/>
    <property type="project" value="UniProtKB-UniRule"/>
</dbReference>
<dbReference type="GO" id="GO:0006231">
    <property type="term" value="P:dTMP biosynthetic process"/>
    <property type="evidence" value="ECO:0007669"/>
    <property type="project" value="UniProtKB-UniRule"/>
</dbReference>
<dbReference type="GO" id="GO:0006235">
    <property type="term" value="P:dTTP biosynthetic process"/>
    <property type="evidence" value="ECO:0007669"/>
    <property type="project" value="UniProtKB-UniRule"/>
</dbReference>
<dbReference type="GO" id="GO:0032259">
    <property type="term" value="P:methylation"/>
    <property type="evidence" value="ECO:0007669"/>
    <property type="project" value="UniProtKB-KW"/>
</dbReference>
<dbReference type="CDD" id="cd00351">
    <property type="entry name" value="TS_Pyrimidine_HMase"/>
    <property type="match status" value="1"/>
</dbReference>
<dbReference type="FunFam" id="3.30.572.10:FF:000001">
    <property type="entry name" value="Thymidylate synthase"/>
    <property type="match status" value="1"/>
</dbReference>
<dbReference type="Gene3D" id="3.30.572.10">
    <property type="entry name" value="Thymidylate synthase/dCMP hydroxymethylase domain"/>
    <property type="match status" value="1"/>
</dbReference>
<dbReference type="HAMAP" id="MF_00008">
    <property type="entry name" value="Thymidy_synth_bact"/>
    <property type="match status" value="1"/>
</dbReference>
<dbReference type="InterPro" id="IPR045097">
    <property type="entry name" value="Thymidate_synth/dCMP_Mease"/>
</dbReference>
<dbReference type="InterPro" id="IPR023451">
    <property type="entry name" value="Thymidate_synth/dCMP_Mease_dom"/>
</dbReference>
<dbReference type="InterPro" id="IPR036926">
    <property type="entry name" value="Thymidate_synth/dCMP_Mease_sf"/>
</dbReference>
<dbReference type="InterPro" id="IPR000398">
    <property type="entry name" value="Thymidylate_synthase"/>
</dbReference>
<dbReference type="InterPro" id="IPR020940">
    <property type="entry name" value="Thymidylate_synthase_AS"/>
</dbReference>
<dbReference type="NCBIfam" id="NF002497">
    <property type="entry name" value="PRK01827.1-3"/>
    <property type="match status" value="1"/>
</dbReference>
<dbReference type="NCBIfam" id="NF002499">
    <property type="entry name" value="PRK01827.1-5"/>
    <property type="match status" value="1"/>
</dbReference>
<dbReference type="NCBIfam" id="TIGR03284">
    <property type="entry name" value="thym_sym"/>
    <property type="match status" value="2"/>
</dbReference>
<dbReference type="PANTHER" id="PTHR11548:SF9">
    <property type="entry name" value="THYMIDYLATE SYNTHASE"/>
    <property type="match status" value="1"/>
</dbReference>
<dbReference type="PANTHER" id="PTHR11548">
    <property type="entry name" value="THYMIDYLATE SYNTHASE 1"/>
    <property type="match status" value="1"/>
</dbReference>
<dbReference type="Pfam" id="PF00303">
    <property type="entry name" value="Thymidylat_synt"/>
    <property type="match status" value="1"/>
</dbReference>
<dbReference type="PRINTS" id="PR00108">
    <property type="entry name" value="THYMDSNTHASE"/>
</dbReference>
<dbReference type="SUPFAM" id="SSF55831">
    <property type="entry name" value="Thymidylate synthase/dCMP hydroxymethylase"/>
    <property type="match status" value="1"/>
</dbReference>
<dbReference type="PROSITE" id="PS00091">
    <property type="entry name" value="THYMIDYLATE_SYNTHASE"/>
    <property type="match status" value="1"/>
</dbReference>
<sequence>MKQYLELMQKVLDEGTQKNDRTGTGTLSIFGHQMRFNLQDGFPLVTTKRCHLRSIIHELLWFLQGDTNIAYLHENNVTIWDEWADENGDLGPVYGKQWRAWPTPDGRHIDQITTVLNQLKNDPDSRRIIVSAWNVGELDKMALAPCHAFFQFYVADGKLSCQLYQRSCDVFLGLPFNIASYALLVHMMAQQCDLEVGDFVWTGGDTHLYSNHMDQTHLQLSREPRPLPKLIIKRKPESIFDYRFEDFEIEGYAPHPGIKAPVAI</sequence>
<feature type="chain" id="PRO_1000000678" description="Thymidylate synthase">
    <location>
        <begin position="1"/>
        <end position="264"/>
    </location>
</feature>
<feature type="active site" description="Nucleophile" evidence="1">
    <location>
        <position position="146"/>
    </location>
</feature>
<feature type="binding site" description="in other chain" evidence="1">
    <location>
        <position position="21"/>
    </location>
    <ligand>
        <name>dUMP</name>
        <dbReference type="ChEBI" id="CHEBI:246422"/>
        <note>ligand shared between dimeric partners</note>
    </ligand>
</feature>
<feature type="binding site" evidence="1">
    <location>
        <position position="51"/>
    </location>
    <ligand>
        <name>(6R)-5,10-methylene-5,6,7,8-tetrahydrofolate</name>
        <dbReference type="ChEBI" id="CHEBI:15636"/>
    </ligand>
</feature>
<feature type="binding site" evidence="1">
    <location>
        <begin position="126"/>
        <end position="127"/>
    </location>
    <ligand>
        <name>dUMP</name>
        <dbReference type="ChEBI" id="CHEBI:246422"/>
        <note>ligand shared between dimeric partners</note>
    </ligand>
</feature>
<feature type="binding site" description="in other chain" evidence="1">
    <location>
        <begin position="166"/>
        <end position="169"/>
    </location>
    <ligand>
        <name>dUMP</name>
        <dbReference type="ChEBI" id="CHEBI:246422"/>
        <note>ligand shared between dimeric partners</note>
    </ligand>
</feature>
<feature type="binding site" evidence="1">
    <location>
        <position position="169"/>
    </location>
    <ligand>
        <name>(6R)-5,10-methylene-5,6,7,8-tetrahydrofolate</name>
        <dbReference type="ChEBI" id="CHEBI:15636"/>
    </ligand>
</feature>
<feature type="binding site" description="in other chain" evidence="1">
    <location>
        <position position="177"/>
    </location>
    <ligand>
        <name>dUMP</name>
        <dbReference type="ChEBI" id="CHEBI:246422"/>
        <note>ligand shared between dimeric partners</note>
    </ligand>
</feature>
<feature type="binding site" description="in other chain" evidence="1">
    <location>
        <begin position="207"/>
        <end position="209"/>
    </location>
    <ligand>
        <name>dUMP</name>
        <dbReference type="ChEBI" id="CHEBI:246422"/>
        <note>ligand shared between dimeric partners</note>
    </ligand>
</feature>
<feature type="binding site" evidence="1">
    <location>
        <position position="263"/>
    </location>
    <ligand>
        <name>(6R)-5,10-methylene-5,6,7,8-tetrahydrofolate</name>
        <dbReference type="ChEBI" id="CHEBI:15636"/>
    </ligand>
</feature>